<reference key="1">
    <citation type="journal article" date="1992" name="J. Bacteriol.">
        <title>Expression and regulation of the antimonite, arsenite, and arsenate resistance operon of Staphylococcus xylosus plasmid pSX267.</title>
        <authorList>
            <person name="Rosenstein R."/>
            <person name="Peschel A."/>
            <person name="Wieland B."/>
            <person name="Goetz F."/>
        </authorList>
    </citation>
    <scope>NUCLEOTIDE SEQUENCE [GENOMIC DNA]</scope>
    <source>
        <strain>DSM 20267 / Isolate C2A</strain>
    </source>
</reference>
<evidence type="ECO:0000255" key="1">
    <source>
        <dbReference type="HAMAP-Rule" id="MF_01624"/>
    </source>
</evidence>
<sequence>MDKKTIYFICTGNSCRSQMAEGWGREILGEDWNVYSAGIETHGVNPKAIEAMKEVDIDISNHTSDLIDNHILKQSDLVVTLCSDADDNCPILPPNVKKEHWGLEDPAGKEWSEFQRVRDEIKLAIENFKLR</sequence>
<organism>
    <name type="scientific">Staphylococcus xylosus</name>
    <dbReference type="NCBI Taxonomy" id="1288"/>
    <lineage>
        <taxon>Bacteria</taxon>
        <taxon>Bacillati</taxon>
        <taxon>Bacillota</taxon>
        <taxon>Bacilli</taxon>
        <taxon>Bacillales</taxon>
        <taxon>Staphylococcaceae</taxon>
        <taxon>Staphylococcus</taxon>
    </lineage>
</organism>
<keyword id="KW-0059">Arsenical resistance</keyword>
<keyword id="KW-0963">Cytoplasm</keyword>
<keyword id="KW-1015">Disulfide bond</keyword>
<keyword id="KW-0560">Oxidoreductase</keyword>
<keyword id="KW-0614">Plasmid</keyword>
<keyword id="KW-0676">Redox-active center</keyword>
<feature type="chain" id="PRO_0000162534" description="Arsenate reductase">
    <location>
        <begin position="1"/>
        <end position="131"/>
    </location>
</feature>
<feature type="active site" description="Nucleophile" evidence="1">
    <location>
        <position position="10"/>
    </location>
</feature>
<feature type="active site" description="Nucleophile" evidence="1">
    <location>
        <position position="82"/>
    </location>
</feature>
<feature type="active site" description="Nucleophile" evidence="1">
    <location>
        <position position="89"/>
    </location>
</feature>
<feature type="disulfide bond" description="Redox-active; alternate" evidence="1">
    <location>
        <begin position="10"/>
        <end position="82"/>
    </location>
</feature>
<feature type="disulfide bond" description="Redox-active; alternate" evidence="1">
    <location>
        <begin position="82"/>
        <end position="89"/>
    </location>
</feature>
<protein>
    <recommendedName>
        <fullName evidence="1">Arsenate reductase</fullName>
        <ecNumber evidence="1">1.20.4.4</ecNumber>
    </recommendedName>
</protein>
<accession>Q01257</accession>
<dbReference type="EC" id="1.20.4.4" evidence="1"/>
<dbReference type="EMBL" id="M80565">
    <property type="protein sequence ID" value="AAA27589.1"/>
    <property type="molecule type" value="Genomic_DNA"/>
</dbReference>
<dbReference type="PIR" id="C41902">
    <property type="entry name" value="C41902"/>
</dbReference>
<dbReference type="SMR" id="Q01257"/>
<dbReference type="GO" id="GO:0005737">
    <property type="term" value="C:cytoplasm"/>
    <property type="evidence" value="ECO:0007669"/>
    <property type="project" value="UniProtKB-SubCell"/>
</dbReference>
<dbReference type="GO" id="GO:0030612">
    <property type="term" value="F:arsenate reductase (thioredoxin) activity"/>
    <property type="evidence" value="ECO:0007669"/>
    <property type="project" value="UniProtKB-UniRule"/>
</dbReference>
<dbReference type="GO" id="GO:0004725">
    <property type="term" value="F:protein tyrosine phosphatase activity"/>
    <property type="evidence" value="ECO:0007669"/>
    <property type="project" value="InterPro"/>
</dbReference>
<dbReference type="GO" id="GO:0046685">
    <property type="term" value="P:response to arsenic-containing substance"/>
    <property type="evidence" value="ECO:0007669"/>
    <property type="project" value="UniProtKB-KW"/>
</dbReference>
<dbReference type="CDD" id="cd16345">
    <property type="entry name" value="LMWP_ArsC"/>
    <property type="match status" value="1"/>
</dbReference>
<dbReference type="FunFam" id="3.40.50.2300:FF:000237">
    <property type="entry name" value="Arsenate reductase"/>
    <property type="match status" value="1"/>
</dbReference>
<dbReference type="Gene3D" id="3.40.50.2300">
    <property type="match status" value="1"/>
</dbReference>
<dbReference type="HAMAP" id="MF_01624">
    <property type="entry name" value="Arsenate_reduct"/>
    <property type="match status" value="1"/>
</dbReference>
<dbReference type="InterPro" id="IPR014064">
    <property type="entry name" value="Arsenate_reductase_ArsC"/>
</dbReference>
<dbReference type="InterPro" id="IPR023485">
    <property type="entry name" value="Ptyr_pPase"/>
</dbReference>
<dbReference type="InterPro" id="IPR036196">
    <property type="entry name" value="Ptyr_pPase_sf"/>
</dbReference>
<dbReference type="NCBIfam" id="TIGR02691">
    <property type="entry name" value="arsC_pI258_fam"/>
    <property type="match status" value="1"/>
</dbReference>
<dbReference type="NCBIfam" id="NF010053">
    <property type="entry name" value="PRK13530.1"/>
    <property type="match status" value="1"/>
</dbReference>
<dbReference type="PANTHER" id="PTHR43428">
    <property type="entry name" value="ARSENATE REDUCTASE"/>
    <property type="match status" value="1"/>
</dbReference>
<dbReference type="PANTHER" id="PTHR43428:SF1">
    <property type="entry name" value="ARSENATE REDUCTASE"/>
    <property type="match status" value="1"/>
</dbReference>
<dbReference type="Pfam" id="PF01451">
    <property type="entry name" value="LMWPc"/>
    <property type="match status" value="1"/>
</dbReference>
<dbReference type="SMART" id="SM00226">
    <property type="entry name" value="LMWPc"/>
    <property type="match status" value="1"/>
</dbReference>
<dbReference type="SUPFAM" id="SSF52788">
    <property type="entry name" value="Phosphotyrosine protein phosphatases I"/>
    <property type="match status" value="1"/>
</dbReference>
<name>ARSC_STAXY</name>
<gene>
    <name evidence="1" type="primary">arsC</name>
</gene>
<proteinExistence type="inferred from homology"/>
<geneLocation type="plasmid">
    <name>pSX267</name>
</geneLocation>
<comment type="function">
    <text evidence="1">Catalyzes the reduction of arsenate [As(V)] to arsenite [As(III)].</text>
</comment>
<comment type="catalytic activity">
    <reaction evidence="1">
        <text>arsenate + [thioredoxin]-dithiol + H(+) = arsenite + [thioredoxin]-disulfide + H2O</text>
        <dbReference type="Rhea" id="RHEA:43848"/>
        <dbReference type="Rhea" id="RHEA-COMP:10698"/>
        <dbReference type="Rhea" id="RHEA-COMP:10700"/>
        <dbReference type="ChEBI" id="CHEBI:15377"/>
        <dbReference type="ChEBI" id="CHEBI:15378"/>
        <dbReference type="ChEBI" id="CHEBI:29242"/>
        <dbReference type="ChEBI" id="CHEBI:29950"/>
        <dbReference type="ChEBI" id="CHEBI:48597"/>
        <dbReference type="ChEBI" id="CHEBI:50058"/>
        <dbReference type="EC" id="1.20.4.4"/>
    </reaction>
</comment>
<comment type="subcellular location">
    <subcellularLocation>
        <location evidence="1">Cytoplasm</location>
    </subcellularLocation>
</comment>
<comment type="similarity">
    <text evidence="1">Belongs to the low molecular weight phosphotyrosine protein phosphatase family. Thioredoxin-coupled ArsC subfamily.</text>
</comment>